<accession>Q8GYY0</accession>
<accession>Q9C5W4</accession>
<accession>Q9FLJ0</accession>
<name>1A112_ARATH</name>
<dbReference type="EC" id="2.6.1.-"/>
<dbReference type="EMBL" id="AB010074">
    <property type="protein sequence ID" value="BAB11238.1"/>
    <property type="status" value="ALT_SEQ"/>
    <property type="molecule type" value="Genomic_DNA"/>
</dbReference>
<dbReference type="EMBL" id="CP002688">
    <property type="protein sequence ID" value="AED96115.1"/>
    <property type="molecule type" value="Genomic_DNA"/>
</dbReference>
<dbReference type="EMBL" id="AF336920">
    <property type="protein sequence ID" value="AAG54001.1"/>
    <property type="molecule type" value="mRNA"/>
</dbReference>
<dbReference type="EMBL" id="BT000463">
    <property type="protein sequence ID" value="AAN17440.1"/>
    <property type="molecule type" value="mRNA"/>
</dbReference>
<dbReference type="EMBL" id="BT002111">
    <property type="protein sequence ID" value="AAN72122.1"/>
    <property type="molecule type" value="mRNA"/>
</dbReference>
<dbReference type="EMBL" id="AK117323">
    <property type="protein sequence ID" value="BAC41994.1"/>
    <property type="status" value="ALT_INIT"/>
    <property type="molecule type" value="mRNA"/>
</dbReference>
<dbReference type="RefSeq" id="NP_199982.2">
    <property type="nucleotide sequence ID" value="NM_124548.5"/>
</dbReference>
<dbReference type="SMR" id="Q8GYY0"/>
<dbReference type="FunCoup" id="Q8GYY0">
    <property type="interactions" value="698"/>
</dbReference>
<dbReference type="STRING" id="3702.Q8GYY0"/>
<dbReference type="GlyGen" id="Q8GYY0">
    <property type="glycosylation" value="2 sites"/>
</dbReference>
<dbReference type="PaxDb" id="3702-AT5G51690.1"/>
<dbReference type="ProteomicsDB" id="244489"/>
<dbReference type="EnsemblPlants" id="AT5G51690.1">
    <property type="protein sequence ID" value="AT5G51690.1"/>
    <property type="gene ID" value="AT5G51690"/>
</dbReference>
<dbReference type="GeneID" id="835243"/>
<dbReference type="Gramene" id="AT5G51690.1">
    <property type="protein sequence ID" value="AT5G51690.1"/>
    <property type="gene ID" value="AT5G51690"/>
</dbReference>
<dbReference type="KEGG" id="ath:AT5G51690"/>
<dbReference type="Araport" id="AT5G51690"/>
<dbReference type="TAIR" id="AT5G51690">
    <property type="gene designation" value="ACS12"/>
</dbReference>
<dbReference type="eggNOG" id="KOG0256">
    <property type="taxonomic scope" value="Eukaryota"/>
</dbReference>
<dbReference type="HOGENOM" id="CLU_017584_1_0_1"/>
<dbReference type="InParanoid" id="Q8GYY0"/>
<dbReference type="PhylomeDB" id="Q8GYY0"/>
<dbReference type="PRO" id="PR:Q8GYY0"/>
<dbReference type="Proteomes" id="UP000006548">
    <property type="component" value="Chromosome 5"/>
</dbReference>
<dbReference type="ExpressionAtlas" id="Q8GYY0">
    <property type="expression patterns" value="baseline and differential"/>
</dbReference>
<dbReference type="GO" id="GO:0030170">
    <property type="term" value="F:pyridoxal phosphate binding"/>
    <property type="evidence" value="ECO:0007669"/>
    <property type="project" value="InterPro"/>
</dbReference>
<dbReference type="GO" id="GO:0008483">
    <property type="term" value="F:transaminase activity"/>
    <property type="evidence" value="ECO:0007669"/>
    <property type="project" value="UniProtKB-KW"/>
</dbReference>
<dbReference type="GO" id="GO:0009058">
    <property type="term" value="P:biosynthetic process"/>
    <property type="evidence" value="ECO:0007669"/>
    <property type="project" value="InterPro"/>
</dbReference>
<dbReference type="CDD" id="cd00609">
    <property type="entry name" value="AAT_like"/>
    <property type="match status" value="1"/>
</dbReference>
<dbReference type="Gene3D" id="3.90.1150.10">
    <property type="entry name" value="Aspartate Aminotransferase, domain 1"/>
    <property type="match status" value="1"/>
</dbReference>
<dbReference type="Gene3D" id="3.40.640.10">
    <property type="entry name" value="Type I PLP-dependent aspartate aminotransferase-like (Major domain)"/>
    <property type="match status" value="1"/>
</dbReference>
<dbReference type="InterPro" id="IPR004839">
    <property type="entry name" value="Aminotransferase_I/II_large"/>
</dbReference>
<dbReference type="InterPro" id="IPR050478">
    <property type="entry name" value="Ethylene_sulfur-biosynth"/>
</dbReference>
<dbReference type="InterPro" id="IPR004838">
    <property type="entry name" value="NHTrfase_class1_PyrdxlP-BS"/>
</dbReference>
<dbReference type="InterPro" id="IPR015424">
    <property type="entry name" value="PyrdxlP-dep_Trfase"/>
</dbReference>
<dbReference type="InterPro" id="IPR015421">
    <property type="entry name" value="PyrdxlP-dep_Trfase_major"/>
</dbReference>
<dbReference type="InterPro" id="IPR015422">
    <property type="entry name" value="PyrdxlP-dep_Trfase_small"/>
</dbReference>
<dbReference type="PANTHER" id="PTHR43795:SF46">
    <property type="entry name" value="AMINOTRANSFERASE ACS12-RELATED"/>
    <property type="match status" value="1"/>
</dbReference>
<dbReference type="PANTHER" id="PTHR43795">
    <property type="entry name" value="BIFUNCTIONAL ASPARTATE AMINOTRANSFERASE AND GLUTAMATE/ASPARTATE-PREPHENATE AMINOTRANSFERASE-RELATED"/>
    <property type="match status" value="1"/>
</dbReference>
<dbReference type="Pfam" id="PF00155">
    <property type="entry name" value="Aminotran_1_2"/>
    <property type="match status" value="1"/>
</dbReference>
<dbReference type="PRINTS" id="PR00753">
    <property type="entry name" value="ACCSYNTHASE"/>
</dbReference>
<dbReference type="SUPFAM" id="SSF53383">
    <property type="entry name" value="PLP-dependent transferases"/>
    <property type="match status" value="1"/>
</dbReference>
<dbReference type="PROSITE" id="PS00105">
    <property type="entry name" value="AA_TRANSFER_CLASS_1"/>
    <property type="match status" value="1"/>
</dbReference>
<protein>
    <recommendedName>
        <fullName>Probable aminotransferase ACS12</fullName>
        <ecNumber>2.6.1.-</ecNumber>
    </recommendedName>
</protein>
<sequence>MRLIVPLRGVIQGRGGLFVGSLIPCCLFYFLQLYLKRRRPPPSDPTDLPRTFSRTNLFSRGNSIGRVRVSSRAVPVAKPSDSPYYIGLERVKTDPYDRITNTDGIIQLGLAESTLCFDLLQRWMSENLMESMMQSDDGEFDISSIAMYKPFEGLLELRVAFADFMSRIMGGNVSFDPSNMVITAGGTPAIEVLAFCLADHGNAFLIPTPYYPGFDRDIKFRTGVELIPVHCRSSDNFTVTVSALEQALNQARKRGSKVSGILFSNPSNPVGNILSRETLCDILRFAQEKNIHVISDEIFAGSVYGDKEFVSMAEIAGSGEFDKTRVHIIYGLSKDLSIPGFRAGVIYSFHEDVVNAAKKLMRFSSVPVLVQRILISLLSDVRFIEGYMAAHRQRIRDKHIRFVEGLKQLGIPCAESGGGLYCWVDMSSLLTSYSEKGELELFEKLLTVAKINATPGTACYCIEPGWFRCCFTALADEDIPVIMERIRQLAESFRS</sequence>
<proteinExistence type="evidence at transcript level"/>
<keyword id="KW-0032">Aminotransferase</keyword>
<keyword id="KW-0663">Pyridoxal phosphate</keyword>
<keyword id="KW-1185">Reference proteome</keyword>
<keyword id="KW-0808">Transferase</keyword>
<reference key="1">
    <citation type="journal article" date="1998" name="DNA Res.">
        <title>Structural analysis of Arabidopsis thaliana chromosome 5. IV. Sequence features of the regions of 1,456,315 bp covered by nineteen physically assigned P1 and TAC clones.</title>
        <authorList>
            <person name="Sato S."/>
            <person name="Kaneko T."/>
            <person name="Kotani H."/>
            <person name="Nakamura Y."/>
            <person name="Asamizu E."/>
            <person name="Miyajima N."/>
            <person name="Tabata S."/>
        </authorList>
    </citation>
    <scope>NUCLEOTIDE SEQUENCE [LARGE SCALE GENOMIC DNA]</scope>
    <source>
        <strain>cv. Columbia</strain>
    </source>
</reference>
<reference key="2">
    <citation type="journal article" date="2017" name="Plant J.">
        <title>Araport11: a complete reannotation of the Arabidopsis thaliana reference genome.</title>
        <authorList>
            <person name="Cheng C.Y."/>
            <person name="Krishnakumar V."/>
            <person name="Chan A.P."/>
            <person name="Thibaud-Nissen F."/>
            <person name="Schobel S."/>
            <person name="Town C.D."/>
        </authorList>
    </citation>
    <scope>GENOME REANNOTATION</scope>
    <source>
        <strain>cv. Columbia</strain>
    </source>
</reference>
<reference key="3">
    <citation type="journal article" date="2003" name="Science">
        <title>Empirical analysis of transcriptional activity in the Arabidopsis genome.</title>
        <authorList>
            <person name="Yamada K."/>
            <person name="Lim J."/>
            <person name="Dale J.M."/>
            <person name="Chen H."/>
            <person name="Shinn P."/>
            <person name="Palm C.J."/>
            <person name="Southwick A.M."/>
            <person name="Wu H.C."/>
            <person name="Kim C.J."/>
            <person name="Nguyen M."/>
            <person name="Pham P.K."/>
            <person name="Cheuk R.F."/>
            <person name="Karlin-Newmann G."/>
            <person name="Liu S.X."/>
            <person name="Lam B."/>
            <person name="Sakano H."/>
            <person name="Wu T."/>
            <person name="Yu G."/>
            <person name="Miranda M."/>
            <person name="Quach H.L."/>
            <person name="Tripp M."/>
            <person name="Chang C.H."/>
            <person name="Lee J.M."/>
            <person name="Toriumi M.J."/>
            <person name="Chan M.M."/>
            <person name="Tang C.C."/>
            <person name="Onodera C.S."/>
            <person name="Deng J.M."/>
            <person name="Akiyama K."/>
            <person name="Ansari Y."/>
            <person name="Arakawa T."/>
            <person name="Banh J."/>
            <person name="Banno F."/>
            <person name="Bowser L."/>
            <person name="Brooks S.Y."/>
            <person name="Carninci P."/>
            <person name="Chao Q."/>
            <person name="Choy N."/>
            <person name="Enju A."/>
            <person name="Goldsmith A.D."/>
            <person name="Gurjal M."/>
            <person name="Hansen N.F."/>
            <person name="Hayashizaki Y."/>
            <person name="Johnson-Hopson C."/>
            <person name="Hsuan V.W."/>
            <person name="Iida K."/>
            <person name="Karnes M."/>
            <person name="Khan S."/>
            <person name="Koesema E."/>
            <person name="Ishida J."/>
            <person name="Jiang P.X."/>
            <person name="Jones T."/>
            <person name="Kawai J."/>
            <person name="Kamiya A."/>
            <person name="Meyers C."/>
            <person name="Nakajima M."/>
            <person name="Narusaka M."/>
            <person name="Seki M."/>
            <person name="Sakurai T."/>
            <person name="Satou M."/>
            <person name="Tamse R."/>
            <person name="Vaysberg M."/>
            <person name="Wallender E.K."/>
            <person name="Wong C."/>
            <person name="Yamamura Y."/>
            <person name="Yuan S."/>
            <person name="Shinozaki K."/>
            <person name="Davis R.W."/>
            <person name="Theologis A."/>
            <person name="Ecker J.R."/>
        </authorList>
    </citation>
    <scope>NUCLEOTIDE SEQUENCE [LARGE SCALE MRNA]</scope>
    <source>
        <strain>cv. Columbia</strain>
    </source>
</reference>
<reference key="4">
    <citation type="journal article" date="2002" name="Science">
        <title>Functional annotation of a full-length Arabidopsis cDNA collection.</title>
        <authorList>
            <person name="Seki M."/>
            <person name="Narusaka M."/>
            <person name="Kamiya A."/>
            <person name="Ishida J."/>
            <person name="Satou M."/>
            <person name="Sakurai T."/>
            <person name="Nakajima M."/>
            <person name="Enju A."/>
            <person name="Akiyama K."/>
            <person name="Oono Y."/>
            <person name="Muramatsu M."/>
            <person name="Hayashizaki Y."/>
            <person name="Kawai J."/>
            <person name="Carninci P."/>
            <person name="Itoh M."/>
            <person name="Ishii Y."/>
            <person name="Arakawa T."/>
            <person name="Shibata K."/>
            <person name="Shinagawa A."/>
            <person name="Shinozaki K."/>
        </authorList>
    </citation>
    <scope>NUCLEOTIDE SEQUENCE [LARGE SCALE MRNA] OF 290-495</scope>
    <source>
        <strain>cv. Columbia</strain>
    </source>
</reference>
<reference key="5">
    <citation type="journal article" date="2003" name="J. Biol. Chem.">
        <title>Biochemical diversity among the 1-amino-cyclopropane-1-carboxylate synthase isozymes encoded by the Arabidopsis gene family.</title>
        <authorList>
            <person name="Yamagami T."/>
            <person name="Tsuchisaka A."/>
            <person name="Yamada K."/>
            <person name="Haddon W.F."/>
            <person name="Harden L.A."/>
            <person name="Theologis A."/>
        </authorList>
    </citation>
    <scope>LACK OF ACS ACTIVITY</scope>
    <scope>TISSUE SPECIFICITY</scope>
    <scope>INDUCTION</scope>
</reference>
<organism>
    <name type="scientific">Arabidopsis thaliana</name>
    <name type="common">Mouse-ear cress</name>
    <dbReference type="NCBI Taxonomy" id="3702"/>
    <lineage>
        <taxon>Eukaryota</taxon>
        <taxon>Viridiplantae</taxon>
        <taxon>Streptophyta</taxon>
        <taxon>Embryophyta</taxon>
        <taxon>Tracheophyta</taxon>
        <taxon>Spermatophyta</taxon>
        <taxon>Magnoliopsida</taxon>
        <taxon>eudicotyledons</taxon>
        <taxon>Gunneridae</taxon>
        <taxon>Pentapetalae</taxon>
        <taxon>rosids</taxon>
        <taxon>malvids</taxon>
        <taxon>Brassicales</taxon>
        <taxon>Brassicaceae</taxon>
        <taxon>Camelineae</taxon>
        <taxon>Arabidopsis</taxon>
    </lineage>
</organism>
<comment type="function">
    <text>Probable aminotransferase. Does not have 1-aminocyclopropane-1-carboxylate synthase (ACS) activity, suggesting that it is not involved in ethylene biosynthesis.</text>
</comment>
<comment type="cofactor">
    <cofactor evidence="1">
        <name>pyridoxal 5'-phosphate</name>
        <dbReference type="ChEBI" id="CHEBI:597326"/>
    </cofactor>
</comment>
<comment type="subunit">
    <text evidence="1">Homodimer.</text>
</comment>
<comment type="tissue specificity">
    <text evidence="2">Expressed in roots. Expressed at low level in leaves, stems, flowers and siliques.</text>
</comment>
<comment type="induction">
    <text evidence="2">By indole-3-acetic acid (IAA) and cycloheximide (CHX).</text>
</comment>
<comment type="similarity">
    <text evidence="3">Belongs to the class-I pyridoxal-phosphate-dependent aminotransferase family.</text>
</comment>
<comment type="caution">
    <text evidence="3">Contains a Phe residue instead of a Tyr in position 151, the Tyr residue being essential in substrate recognition by ACS enzymes.</text>
</comment>
<comment type="sequence caution" evidence="3">
    <conflict type="erroneous gene model prediction">
        <sequence resource="EMBL-CDS" id="BAB11238"/>
    </conflict>
</comment>
<comment type="sequence caution" evidence="3">
    <conflict type="erroneous initiation">
        <sequence resource="EMBL-CDS" id="BAC41994"/>
    </conflict>
</comment>
<feature type="chain" id="PRO_0000123906" description="Probable aminotransferase ACS12">
    <location>
        <begin position="1"/>
        <end position="495"/>
    </location>
</feature>
<feature type="modified residue" description="N6-(pyridoxal phosphate)lysine" evidence="1">
    <location>
        <position position="334"/>
    </location>
</feature>
<evidence type="ECO:0000250" key="1"/>
<evidence type="ECO:0000269" key="2">
    <source>
    </source>
</evidence>
<evidence type="ECO:0000305" key="3"/>
<gene>
    <name type="primary">ACS12</name>
    <name type="ordered locus">At5g51690</name>
    <name type="ORF">K10D11.3</name>
    <name type="ORF">MIO24.18</name>
</gene>